<protein>
    <recommendedName>
        <fullName evidence="1">Protein Smg homolog</fullName>
    </recommendedName>
</protein>
<reference key="1">
    <citation type="journal article" date="2008" name="Genome Biol.">
        <title>The complete genome, comparative and functional analysis of Stenotrophomonas maltophilia reveals an organism heavily shielded by drug resistance determinants.</title>
        <authorList>
            <person name="Crossman L.C."/>
            <person name="Gould V.C."/>
            <person name="Dow J.M."/>
            <person name="Vernikos G.S."/>
            <person name="Okazaki A."/>
            <person name="Sebaihia M."/>
            <person name="Saunders D."/>
            <person name="Arrowsmith C."/>
            <person name="Carver T."/>
            <person name="Peters N."/>
            <person name="Adlem E."/>
            <person name="Kerhornou A."/>
            <person name="Lord A."/>
            <person name="Murphy L."/>
            <person name="Seeger K."/>
            <person name="Squares R."/>
            <person name="Rutter S."/>
            <person name="Quail M.A."/>
            <person name="Rajandream M.A."/>
            <person name="Harris D."/>
            <person name="Churcher C."/>
            <person name="Bentley S.D."/>
            <person name="Parkhill J."/>
            <person name="Thomson N.R."/>
            <person name="Avison M.B."/>
        </authorList>
    </citation>
    <scope>NUCLEOTIDE SEQUENCE [LARGE SCALE GENOMIC DNA]</scope>
    <source>
        <strain>K279a</strain>
    </source>
</reference>
<feature type="chain" id="PRO_1000129909" description="Protein Smg homolog">
    <location>
        <begin position="1"/>
        <end position="157"/>
    </location>
</feature>
<accession>B2FIR7</accession>
<gene>
    <name evidence="1" type="primary">smg</name>
    <name type="ordered locus">Smlt4181</name>
</gene>
<proteinExistence type="inferred from homology"/>
<sequence length="157" mass="18056">MKESILDVLLYLFEHYFSEDADLIRDRDSLQNGLIQAGFSPTEINKAFDWLDALAAQRPSVAQARVDGPVRVYHGPELDKLDVECRGFLLYLEQHGILDADQRELVLDRAMALDQDELDLDDLKWVVLMVLFNQPGSEAAYAWMETQMFMDEPEPLH</sequence>
<keyword id="KW-1185">Reference proteome</keyword>
<comment type="similarity">
    <text evidence="1">Belongs to the Smg family.</text>
</comment>
<evidence type="ECO:0000255" key="1">
    <source>
        <dbReference type="HAMAP-Rule" id="MF_00598"/>
    </source>
</evidence>
<name>SMG_STRMK</name>
<organism>
    <name type="scientific">Stenotrophomonas maltophilia (strain K279a)</name>
    <dbReference type="NCBI Taxonomy" id="522373"/>
    <lineage>
        <taxon>Bacteria</taxon>
        <taxon>Pseudomonadati</taxon>
        <taxon>Pseudomonadota</taxon>
        <taxon>Gammaproteobacteria</taxon>
        <taxon>Lysobacterales</taxon>
        <taxon>Lysobacteraceae</taxon>
        <taxon>Stenotrophomonas</taxon>
        <taxon>Stenotrophomonas maltophilia group</taxon>
    </lineage>
</organism>
<dbReference type="EMBL" id="AM743169">
    <property type="protein sequence ID" value="CAQ47572.1"/>
    <property type="molecule type" value="Genomic_DNA"/>
</dbReference>
<dbReference type="RefSeq" id="WP_005411195.1">
    <property type="nucleotide sequence ID" value="NC_010943.1"/>
</dbReference>
<dbReference type="SMR" id="B2FIR7"/>
<dbReference type="EnsemblBacteria" id="CAQ47572">
    <property type="protein sequence ID" value="CAQ47572"/>
    <property type="gene ID" value="Smlt4181"/>
</dbReference>
<dbReference type="KEGG" id="sml:Smlt4181"/>
<dbReference type="eggNOG" id="COG2922">
    <property type="taxonomic scope" value="Bacteria"/>
</dbReference>
<dbReference type="HOGENOM" id="CLU_133242_0_0_6"/>
<dbReference type="Proteomes" id="UP000008840">
    <property type="component" value="Chromosome"/>
</dbReference>
<dbReference type="HAMAP" id="MF_00598">
    <property type="entry name" value="Smg"/>
    <property type="match status" value="1"/>
</dbReference>
<dbReference type="InterPro" id="IPR007456">
    <property type="entry name" value="Smg"/>
</dbReference>
<dbReference type="NCBIfam" id="NF002897">
    <property type="entry name" value="PRK03430.1"/>
    <property type="match status" value="1"/>
</dbReference>
<dbReference type="PANTHER" id="PTHR38692">
    <property type="entry name" value="PROTEIN SMG"/>
    <property type="match status" value="1"/>
</dbReference>
<dbReference type="PANTHER" id="PTHR38692:SF1">
    <property type="entry name" value="PROTEIN SMG"/>
    <property type="match status" value="1"/>
</dbReference>
<dbReference type="Pfam" id="PF04361">
    <property type="entry name" value="DUF494"/>
    <property type="match status" value="1"/>
</dbReference>